<organism>
    <name type="scientific">Persephonella marina (strain DSM 14350 / EX-H1)</name>
    <dbReference type="NCBI Taxonomy" id="123214"/>
    <lineage>
        <taxon>Bacteria</taxon>
        <taxon>Pseudomonadati</taxon>
        <taxon>Aquificota</taxon>
        <taxon>Aquificia</taxon>
        <taxon>Aquificales</taxon>
        <taxon>Hydrogenothermaceae</taxon>
        <taxon>Persephonella</taxon>
    </lineage>
</organism>
<name>RL29_PERMH</name>
<gene>
    <name evidence="1" type="primary">rpmC</name>
    <name type="ordered locus">PERMA_1204</name>
</gene>
<comment type="similarity">
    <text evidence="1">Belongs to the universal ribosomal protein uL29 family.</text>
</comment>
<dbReference type="EMBL" id="CP001230">
    <property type="protein sequence ID" value="ACO04200.1"/>
    <property type="molecule type" value="Genomic_DNA"/>
</dbReference>
<dbReference type="RefSeq" id="WP_012676438.1">
    <property type="nucleotide sequence ID" value="NC_012440.1"/>
</dbReference>
<dbReference type="SMR" id="C0QQN1"/>
<dbReference type="STRING" id="123214.PERMA_1204"/>
<dbReference type="PaxDb" id="123214-PERMA_1204"/>
<dbReference type="KEGG" id="pmx:PERMA_1204"/>
<dbReference type="eggNOG" id="COG0255">
    <property type="taxonomic scope" value="Bacteria"/>
</dbReference>
<dbReference type="HOGENOM" id="CLU_158491_5_2_0"/>
<dbReference type="OrthoDB" id="9815192at2"/>
<dbReference type="Proteomes" id="UP000001366">
    <property type="component" value="Chromosome"/>
</dbReference>
<dbReference type="GO" id="GO:0022625">
    <property type="term" value="C:cytosolic large ribosomal subunit"/>
    <property type="evidence" value="ECO:0007669"/>
    <property type="project" value="TreeGrafter"/>
</dbReference>
<dbReference type="GO" id="GO:0003735">
    <property type="term" value="F:structural constituent of ribosome"/>
    <property type="evidence" value="ECO:0007669"/>
    <property type="project" value="InterPro"/>
</dbReference>
<dbReference type="GO" id="GO:0006412">
    <property type="term" value="P:translation"/>
    <property type="evidence" value="ECO:0007669"/>
    <property type="project" value="UniProtKB-UniRule"/>
</dbReference>
<dbReference type="CDD" id="cd00427">
    <property type="entry name" value="Ribosomal_L29_HIP"/>
    <property type="match status" value="1"/>
</dbReference>
<dbReference type="FunFam" id="1.10.287.310:FF:000001">
    <property type="entry name" value="50S ribosomal protein L29"/>
    <property type="match status" value="1"/>
</dbReference>
<dbReference type="Gene3D" id="1.10.287.310">
    <property type="match status" value="1"/>
</dbReference>
<dbReference type="HAMAP" id="MF_00374">
    <property type="entry name" value="Ribosomal_uL29"/>
    <property type="match status" value="1"/>
</dbReference>
<dbReference type="InterPro" id="IPR050063">
    <property type="entry name" value="Ribosomal_protein_uL29"/>
</dbReference>
<dbReference type="InterPro" id="IPR001854">
    <property type="entry name" value="Ribosomal_uL29"/>
</dbReference>
<dbReference type="InterPro" id="IPR018254">
    <property type="entry name" value="Ribosomal_uL29_CS"/>
</dbReference>
<dbReference type="InterPro" id="IPR036049">
    <property type="entry name" value="Ribosomal_uL29_sf"/>
</dbReference>
<dbReference type="NCBIfam" id="TIGR00012">
    <property type="entry name" value="L29"/>
    <property type="match status" value="1"/>
</dbReference>
<dbReference type="PANTHER" id="PTHR10916">
    <property type="entry name" value="60S RIBOSOMAL PROTEIN L35/50S RIBOSOMAL PROTEIN L29"/>
    <property type="match status" value="1"/>
</dbReference>
<dbReference type="PANTHER" id="PTHR10916:SF0">
    <property type="entry name" value="LARGE RIBOSOMAL SUBUNIT PROTEIN UL29C"/>
    <property type="match status" value="1"/>
</dbReference>
<dbReference type="Pfam" id="PF00831">
    <property type="entry name" value="Ribosomal_L29"/>
    <property type="match status" value="1"/>
</dbReference>
<dbReference type="SUPFAM" id="SSF46561">
    <property type="entry name" value="Ribosomal protein L29 (L29p)"/>
    <property type="match status" value="1"/>
</dbReference>
<dbReference type="PROSITE" id="PS00579">
    <property type="entry name" value="RIBOSOMAL_L29"/>
    <property type="match status" value="1"/>
</dbReference>
<accession>C0QQN1</accession>
<feature type="chain" id="PRO_1000194026" description="Large ribosomal subunit protein uL29">
    <location>
        <begin position="1"/>
        <end position="68"/>
    </location>
</feature>
<protein>
    <recommendedName>
        <fullName evidence="1">Large ribosomal subunit protein uL29</fullName>
    </recommendedName>
    <alternativeName>
        <fullName evidence="2">50S ribosomal protein L29</fullName>
    </alternativeName>
</protein>
<reference key="1">
    <citation type="journal article" date="2009" name="J. Bacteriol.">
        <title>Complete and draft genome sequences of six members of the Aquificales.</title>
        <authorList>
            <person name="Reysenbach A.-L."/>
            <person name="Hamamura N."/>
            <person name="Podar M."/>
            <person name="Griffiths E."/>
            <person name="Ferreira S."/>
            <person name="Hochstein R."/>
            <person name="Heidelberg J."/>
            <person name="Johnson J."/>
            <person name="Mead D."/>
            <person name="Pohorille A."/>
            <person name="Sarmiento M."/>
            <person name="Schweighofer K."/>
            <person name="Seshadri R."/>
            <person name="Voytek M.A."/>
        </authorList>
    </citation>
    <scope>NUCLEOTIDE SEQUENCE [LARGE SCALE GENOMIC DNA]</scope>
    <source>
        <strain>DSM 14350 / EX-H1</strain>
    </source>
</reference>
<evidence type="ECO:0000255" key="1">
    <source>
        <dbReference type="HAMAP-Rule" id="MF_00374"/>
    </source>
</evidence>
<evidence type="ECO:0000305" key="2"/>
<keyword id="KW-1185">Reference proteome</keyword>
<keyword id="KW-0687">Ribonucleoprotein</keyword>
<keyword id="KW-0689">Ribosomal protein</keyword>
<sequence>MKAEELRKLTDDELKDKLTELKKKLMNLRFQNAVGGLEKPSEIKATKRDIARILTILRERELSKAGGE</sequence>
<proteinExistence type="inferred from homology"/>